<dbReference type="SMR" id="C0HLM1"/>
<dbReference type="GO" id="GO:0005576">
    <property type="term" value="C:extracellular region"/>
    <property type="evidence" value="ECO:0000314"/>
    <property type="project" value="UniProtKB"/>
</dbReference>
<dbReference type="GO" id="GO:0019871">
    <property type="term" value="F:sodium channel inhibitor activity"/>
    <property type="evidence" value="ECO:0007669"/>
    <property type="project" value="InterPro"/>
</dbReference>
<dbReference type="GO" id="GO:0090729">
    <property type="term" value="F:toxin activity"/>
    <property type="evidence" value="ECO:0000314"/>
    <property type="project" value="UniProtKB"/>
</dbReference>
<dbReference type="GO" id="GO:0002213">
    <property type="term" value="P:defense response to insect"/>
    <property type="evidence" value="ECO:0000314"/>
    <property type="project" value="UniProtKB"/>
</dbReference>
<dbReference type="GO" id="GO:0044493">
    <property type="term" value="P:envenomation resulting in negative regulation of voltage-gated sodium channel activity in another organism"/>
    <property type="evidence" value="ECO:0000314"/>
    <property type="project" value="UniProtKB"/>
</dbReference>
<dbReference type="CDD" id="cd23106">
    <property type="entry name" value="neurotoxins_LC_scorpion"/>
    <property type="match status" value="1"/>
</dbReference>
<dbReference type="Gene3D" id="3.30.30.10">
    <property type="entry name" value="Knottin, scorpion toxin-like"/>
    <property type="match status" value="1"/>
</dbReference>
<dbReference type="InterPro" id="IPR044062">
    <property type="entry name" value="LCN-type_CS_alpha_beta_dom"/>
</dbReference>
<dbReference type="InterPro" id="IPR003614">
    <property type="entry name" value="Scorpion_toxin-like"/>
</dbReference>
<dbReference type="InterPro" id="IPR036574">
    <property type="entry name" value="Scorpion_toxin-like_sf"/>
</dbReference>
<dbReference type="InterPro" id="IPR018218">
    <property type="entry name" value="Scorpion_toxinL"/>
</dbReference>
<dbReference type="InterPro" id="IPR002061">
    <property type="entry name" value="Scorpion_toxinL/defensin"/>
</dbReference>
<dbReference type="Pfam" id="PF00537">
    <property type="entry name" value="Toxin_3"/>
    <property type="match status" value="1"/>
</dbReference>
<dbReference type="PRINTS" id="PR00285">
    <property type="entry name" value="SCORPNTOXIN"/>
</dbReference>
<dbReference type="SMART" id="SM00505">
    <property type="entry name" value="Knot1"/>
    <property type="match status" value="1"/>
</dbReference>
<dbReference type="SUPFAM" id="SSF57095">
    <property type="entry name" value="Scorpion toxin-like"/>
    <property type="match status" value="1"/>
</dbReference>
<dbReference type="PROSITE" id="PS51863">
    <property type="entry name" value="LCN_CSAB"/>
    <property type="match status" value="1"/>
</dbReference>
<comment type="function">
    <text evidence="2">Inhibits voltage-gated sodium channels (Nav). This toxin shows insect lethality against crickets.</text>
</comment>
<comment type="subcellular location">
    <subcellularLocation>
        <location evidence="2">Secreted</location>
    </subcellularLocation>
</comment>
<comment type="tissue specificity">
    <text evidence="5">Expressed by the venom gland.</text>
</comment>
<comment type="domain">
    <text evidence="4">Has the structural arrangement of an alpha-helix connected to antiparallel beta-sheets by disulfide bonds (CS-alpha/beta).</text>
</comment>
<comment type="similarity">
    <text evidence="4">Belongs to the long (4 C-C) scorpion toxin superfamily. Sodium channel inhibitor family.</text>
</comment>
<protein>
    <recommendedName>
        <fullName evidence="3">Toxin Tma3</fullName>
    </recommendedName>
</protein>
<organism evidence="3">
    <name type="scientific">Tityus macrochirus</name>
    <name type="common">Scorpion</name>
    <dbReference type="NCBI Taxonomy" id="2599738"/>
    <lineage>
        <taxon>Eukaryota</taxon>
        <taxon>Metazoa</taxon>
        <taxon>Ecdysozoa</taxon>
        <taxon>Arthropoda</taxon>
        <taxon>Chelicerata</taxon>
        <taxon>Arachnida</taxon>
        <taxon>Scorpiones</taxon>
        <taxon>Buthida</taxon>
        <taxon>Buthoidea</taxon>
        <taxon>Buthidae</taxon>
        <taxon>Tityus</taxon>
    </lineage>
</organism>
<feature type="chain" id="PRO_0000448250" description="Toxin Tma3">
    <location>
        <begin position="1"/>
        <end position="69"/>
    </location>
</feature>
<feature type="domain" description="LCN-type CS-alpha/beta" evidence="1">
    <location>
        <begin position="2"/>
        <end position="66"/>
    </location>
</feature>
<feature type="disulfide bond" evidence="1">
    <location>
        <begin position="14"/>
        <end position="65"/>
    </location>
</feature>
<feature type="disulfide bond" evidence="1">
    <location>
        <begin position="18"/>
        <end position="41"/>
    </location>
</feature>
<feature type="disulfide bond" evidence="1">
    <location>
        <begin position="27"/>
        <end position="48"/>
    </location>
</feature>
<feature type="disulfide bond" evidence="1">
    <location>
        <begin position="31"/>
        <end position="50"/>
    </location>
</feature>
<evidence type="ECO:0000255" key="1">
    <source>
        <dbReference type="PROSITE-ProRule" id="PRU01210"/>
    </source>
</evidence>
<evidence type="ECO:0000269" key="2">
    <source>
    </source>
</evidence>
<evidence type="ECO:0000303" key="3">
    <source>
    </source>
</evidence>
<evidence type="ECO:0000305" key="4"/>
<evidence type="ECO:0000305" key="5">
    <source>
    </source>
</evidence>
<reference key="1">
    <citation type="journal article" date="2019" name="Toxicon">
        <title>Structural and functional characterization of toxic peptides purified from the venom of the Colombian scorpion Tityus macrochirus.</title>
        <authorList>
            <person name="Rincon-Cortes C.A."/>
            <person name="Olamendi-Portugal T."/>
            <person name="Carcamo-Noriega E.N."/>
            <person name="Santillan E.G."/>
            <person name="Zuniga F.Z."/>
            <person name="Reyes-Montano E.A."/>
            <person name="Vega Castro N.A."/>
            <person name="Possani L.D."/>
        </authorList>
    </citation>
    <scope>PROTEIN SEQUENCE</scope>
    <scope>FUNCTION</scope>
    <scope>SUBCELLULAR LOCATION</scope>
    <scope>TISSUE SPECIFICITY</scope>
    <source>
        <tissue evidence="3">Venom</tissue>
    </source>
</reference>
<proteinExistence type="evidence at protein level"/>
<name>SCX3_TITMA</name>
<accession>C0HLM1</accession>
<keyword id="KW-0903">Direct protein sequencing</keyword>
<keyword id="KW-1015">Disulfide bond</keyword>
<keyword id="KW-0872">Ion channel impairing toxin</keyword>
<keyword id="KW-0528">Neurotoxin</keyword>
<keyword id="KW-0964">Secreted</keyword>
<keyword id="KW-0800">Toxin</keyword>
<keyword id="KW-0738">Voltage-gated sodium channel impairing toxin</keyword>
<sequence>KKDDYPVDTAKRNCKFPCNVIDKEGYCDNLCKGRKAEKGYCYRLNASCYCYGLPDDSPTKKSGRCNPNL</sequence>